<gene>
    <name type="primary">hupA</name>
    <name type="ordered locus">VC_0273</name>
</gene>
<comment type="function">
    <text evidence="1">Histone-like DNA-binding protein which is capable of wrapping DNA to stabilize it, and thus to prevent its denaturation under extreme environmental conditions.</text>
</comment>
<comment type="subunit">
    <text evidence="1">Heterodimer of an alpha and a beta chain.</text>
</comment>
<comment type="similarity">
    <text evidence="2">Belongs to the bacterial histone-like protein family.</text>
</comment>
<evidence type="ECO:0000250" key="1"/>
<evidence type="ECO:0000305" key="2"/>
<sequence>MNKTQLIDFIAEKADLTKVQAKAALEATLGAVEGALKDGDQVQLIGFGTFKVNHRSARTGRNPKTGEEIKIAAANVPAFVAGKALKDAIK</sequence>
<protein>
    <recommendedName>
        <fullName>DNA-binding protein HU-alpha</fullName>
    </recommendedName>
</protein>
<reference key="1">
    <citation type="journal article" date="2000" name="Nature">
        <title>DNA sequence of both chromosomes of the cholera pathogen Vibrio cholerae.</title>
        <authorList>
            <person name="Heidelberg J.F."/>
            <person name="Eisen J.A."/>
            <person name="Nelson W.C."/>
            <person name="Clayton R.A."/>
            <person name="Gwinn M.L."/>
            <person name="Dodson R.J."/>
            <person name="Haft D.H."/>
            <person name="Hickey E.K."/>
            <person name="Peterson J.D."/>
            <person name="Umayam L.A."/>
            <person name="Gill S.R."/>
            <person name="Nelson K.E."/>
            <person name="Read T.D."/>
            <person name="Tettelin H."/>
            <person name="Richardson D.L."/>
            <person name="Ermolaeva M.D."/>
            <person name="Vamathevan J.J."/>
            <person name="Bass S."/>
            <person name="Qin H."/>
            <person name="Dragoi I."/>
            <person name="Sellers P."/>
            <person name="McDonald L.A."/>
            <person name="Utterback T.R."/>
            <person name="Fleischmann R.D."/>
            <person name="Nierman W.C."/>
            <person name="White O."/>
            <person name="Salzberg S.L."/>
            <person name="Smith H.O."/>
            <person name="Colwell R.R."/>
            <person name="Mekalanos J.J."/>
            <person name="Venter J.C."/>
            <person name="Fraser C.M."/>
        </authorList>
    </citation>
    <scope>NUCLEOTIDE SEQUENCE [LARGE SCALE GENOMIC DNA]</scope>
    <source>
        <strain>ATCC 39315 / El Tor Inaba N16961</strain>
    </source>
</reference>
<name>DBHA_VIBCH</name>
<feature type="chain" id="PRO_0000104993" description="DNA-binding protein HU-alpha">
    <location>
        <begin position="1"/>
        <end position="90"/>
    </location>
</feature>
<keyword id="KW-0226">DNA condensation</keyword>
<keyword id="KW-0238">DNA-binding</keyword>
<keyword id="KW-1185">Reference proteome</keyword>
<dbReference type="EMBL" id="AE003852">
    <property type="protein sequence ID" value="AAF93448.1"/>
    <property type="molecule type" value="Genomic_DNA"/>
</dbReference>
<dbReference type="PIR" id="H82343">
    <property type="entry name" value="H82343"/>
</dbReference>
<dbReference type="RefSeq" id="NP_229929.1">
    <property type="nucleotide sequence ID" value="NC_002505.1"/>
</dbReference>
<dbReference type="RefSeq" id="WP_001044507.1">
    <property type="nucleotide sequence ID" value="NZ_LT906614.1"/>
</dbReference>
<dbReference type="SMR" id="Q9KV83"/>
<dbReference type="STRING" id="243277.VC_0273"/>
<dbReference type="DNASU" id="2614479"/>
<dbReference type="EnsemblBacteria" id="AAF93448">
    <property type="protein sequence ID" value="AAF93448"/>
    <property type="gene ID" value="VC_0273"/>
</dbReference>
<dbReference type="GeneID" id="89515532"/>
<dbReference type="KEGG" id="vch:VC_0273"/>
<dbReference type="PATRIC" id="fig|243277.26.peg.253"/>
<dbReference type="eggNOG" id="COG0776">
    <property type="taxonomic scope" value="Bacteria"/>
</dbReference>
<dbReference type="HOGENOM" id="CLU_105066_3_1_6"/>
<dbReference type="Proteomes" id="UP000000584">
    <property type="component" value="Chromosome 1"/>
</dbReference>
<dbReference type="GO" id="GO:0005829">
    <property type="term" value="C:cytosol"/>
    <property type="evidence" value="ECO:0000318"/>
    <property type="project" value="GO_Central"/>
</dbReference>
<dbReference type="GO" id="GO:0003677">
    <property type="term" value="F:DNA binding"/>
    <property type="evidence" value="ECO:0000318"/>
    <property type="project" value="GO_Central"/>
</dbReference>
<dbReference type="GO" id="GO:0030527">
    <property type="term" value="F:structural constituent of chromatin"/>
    <property type="evidence" value="ECO:0007669"/>
    <property type="project" value="InterPro"/>
</dbReference>
<dbReference type="GO" id="GO:0030261">
    <property type="term" value="P:chromosome condensation"/>
    <property type="evidence" value="ECO:0007669"/>
    <property type="project" value="UniProtKB-KW"/>
</dbReference>
<dbReference type="CDD" id="cd13831">
    <property type="entry name" value="HU"/>
    <property type="match status" value="1"/>
</dbReference>
<dbReference type="FunFam" id="4.10.520.10:FF:000001">
    <property type="entry name" value="DNA-binding protein HU"/>
    <property type="match status" value="1"/>
</dbReference>
<dbReference type="Gene3D" id="4.10.520.10">
    <property type="entry name" value="IHF-like DNA-binding proteins"/>
    <property type="match status" value="1"/>
</dbReference>
<dbReference type="InterPro" id="IPR000119">
    <property type="entry name" value="Hist_DNA-bd"/>
</dbReference>
<dbReference type="InterPro" id="IPR020816">
    <property type="entry name" value="Histone-like_DNA-bd_CS"/>
</dbReference>
<dbReference type="InterPro" id="IPR010992">
    <property type="entry name" value="IHF-like_DNA-bd_dom_sf"/>
</dbReference>
<dbReference type="NCBIfam" id="NF008023">
    <property type="entry name" value="PRK10753.1"/>
    <property type="match status" value="1"/>
</dbReference>
<dbReference type="PANTHER" id="PTHR33175">
    <property type="entry name" value="DNA-BINDING PROTEIN HU"/>
    <property type="match status" value="1"/>
</dbReference>
<dbReference type="PANTHER" id="PTHR33175:SF12">
    <property type="entry name" value="DNA-BINDING PROTEIN HU-ALPHA"/>
    <property type="match status" value="1"/>
</dbReference>
<dbReference type="Pfam" id="PF00216">
    <property type="entry name" value="Bac_DNA_binding"/>
    <property type="match status" value="1"/>
</dbReference>
<dbReference type="PRINTS" id="PR01727">
    <property type="entry name" value="DNABINDINGHU"/>
</dbReference>
<dbReference type="SMART" id="SM00411">
    <property type="entry name" value="BHL"/>
    <property type="match status" value="1"/>
</dbReference>
<dbReference type="SUPFAM" id="SSF47729">
    <property type="entry name" value="IHF-like DNA-binding proteins"/>
    <property type="match status" value="1"/>
</dbReference>
<dbReference type="PROSITE" id="PS00045">
    <property type="entry name" value="HISTONE_LIKE"/>
    <property type="match status" value="1"/>
</dbReference>
<accession>Q9KV83</accession>
<organism>
    <name type="scientific">Vibrio cholerae serotype O1 (strain ATCC 39315 / El Tor Inaba N16961)</name>
    <dbReference type="NCBI Taxonomy" id="243277"/>
    <lineage>
        <taxon>Bacteria</taxon>
        <taxon>Pseudomonadati</taxon>
        <taxon>Pseudomonadota</taxon>
        <taxon>Gammaproteobacteria</taxon>
        <taxon>Vibrionales</taxon>
        <taxon>Vibrionaceae</taxon>
        <taxon>Vibrio</taxon>
    </lineage>
</organism>
<proteinExistence type="inferred from homology"/>